<proteinExistence type="inferred from homology"/>
<comment type="function">
    <text>May function as an environmental regulator of TCP biogenesis. Negatively regulates the synthesis of the major pilin subunit of TCP (TcpA).</text>
</comment>
<comment type="subcellular location">
    <subcellularLocation>
        <location>Cell inner membrane</location>
        <topology>Peripheral membrane protein</topology>
    </subcellularLocation>
</comment>
<comment type="similarity">
    <text evidence="2">Belongs to the methyl-accepting chemotaxis (MCP) protein family.</text>
</comment>
<keyword id="KW-0997">Cell inner membrane</keyword>
<keyword id="KW-1003">Cell membrane</keyword>
<keyword id="KW-0472">Membrane</keyword>
<keyword id="KW-0488">Methylation</keyword>
<keyword id="KW-0807">Transducer</keyword>
<name>TCPI_VIBC3</name>
<protein>
    <recommendedName>
        <fullName>Toxin coregulated pilus biosynthesis protein I</fullName>
    </recommendedName>
    <alternativeName>
        <fullName>TCP pilus biosynthesis protein TcpI</fullName>
    </alternativeName>
</protein>
<sequence>MIKKIISVFLLLACIITSAFTAFFYHSKLSDQTKSISSLSSQQAQERLQSYQDSLDFYKKLNISLSVAIANSLRDKAVEELNAIALRIQENHGFIGVTFASLDGTMFTDIGTLDWNAKTLRRDWFVKTVELGTKHYTAFDIDKTTGQHVLTIATPVYVGNDIVGSVALDIAGDQIASPNGSGMFMMTDRNFNVFASDLTHSTLIGKDLTKEKPLFKNLVSGQYVTFSDADSHWFAVSQTEIDGENKLFTIIDIQQIVQTYKRDIQLIIAGFSGFSCVMLIGLYWVLSKELSGVRQIREWILSLSDGQIKERRPIKFHNELDTIAQSLENLQFRLLDVVRNSHRTMNDLSIKQTDITYSIEGNTNNSQQELGLIEQVATATTQLSCTSFDVMQQAQSAELNAETAQKLIAESHDIIDSSSKQTEMVTLSIHESQQIINQLREFSDNISSVTDVINNISDQTNLLALNAAIEAARAGEQGRGFAVVADEVRSLAVKTQQSTIDIQGIILKLQEQSQLADQVMTRNVSLIHETQVANRALIASFNLISDKVLEISNINSIVSTAANEQKIVTEDVAKQMEDIRYLVQENLSAMERTKQANQNISDLTTNLNDALSFFKIELTS</sequence>
<organism>
    <name type="scientific">Vibrio cholerae serotype O1 (strain ATCC 39541 / Classical Ogawa 395 / O395)</name>
    <dbReference type="NCBI Taxonomy" id="345073"/>
    <lineage>
        <taxon>Bacteria</taxon>
        <taxon>Pseudomonadati</taxon>
        <taxon>Pseudomonadota</taxon>
        <taxon>Gammaproteobacteria</taxon>
        <taxon>Vibrionales</taxon>
        <taxon>Vibrionaceae</taxon>
        <taxon>Vibrio</taxon>
    </lineage>
</organism>
<feature type="chain" id="PRO_0000321861" description="Toxin coregulated pilus biosynthesis protein I">
    <location>
        <begin position="1"/>
        <end position="620"/>
    </location>
</feature>
<feature type="domain" description="Methyl-accepting transducer" evidence="1">
    <location>
        <begin position="344"/>
        <end position="580"/>
    </location>
</feature>
<accession>A5F389</accession>
<accession>C3LYJ0</accession>
<accession>P29486</accession>
<accession>Q9KTR5</accession>
<gene>
    <name type="primary">tcpI</name>
    <name type="synonym">tagB</name>
    <name type="ordered locus">VC0395_A0350</name>
    <name type="ordered locus">VC395_0841</name>
</gene>
<evidence type="ECO:0000255" key="1">
    <source>
        <dbReference type="PROSITE-ProRule" id="PRU00284"/>
    </source>
</evidence>
<evidence type="ECO:0000305" key="2"/>
<reference key="1">
    <citation type="journal article" date="1994" name="Infect. Immun.">
        <title>The Vibrio cholerae toxin-coregulated-pilus gene tcpI encodes a homolog of methyl-accepting chemotaxis proteins.</title>
        <authorList>
            <person name="Harkey C.W."/>
            <person name="Everiss K.D."/>
            <person name="Peterson K.M."/>
        </authorList>
    </citation>
    <scope>NUCLEOTIDE SEQUENCE [GENOMIC DNA]</scope>
</reference>
<reference key="2">
    <citation type="submission" date="2007-03" db="EMBL/GenBank/DDBJ databases">
        <authorList>
            <person name="Heidelberg J."/>
        </authorList>
    </citation>
    <scope>NUCLEOTIDE SEQUENCE [LARGE SCALE GENOMIC DNA]</scope>
    <source>
        <strain>ATCC 39541 / Classical Ogawa 395 / O395</strain>
    </source>
</reference>
<reference key="3">
    <citation type="journal article" date="2008" name="PLoS ONE">
        <title>A recalibrated molecular clock and independent origins for the cholera pandemic clones.</title>
        <authorList>
            <person name="Feng L."/>
            <person name="Reeves P.R."/>
            <person name="Lan R."/>
            <person name="Ren Y."/>
            <person name="Gao C."/>
            <person name="Zhou Z."/>
            <person name="Ren Y."/>
            <person name="Cheng J."/>
            <person name="Wang W."/>
            <person name="Wang J."/>
            <person name="Qian W."/>
            <person name="Li D."/>
            <person name="Wang L."/>
        </authorList>
    </citation>
    <scope>NUCLEOTIDE SEQUENCE [LARGE SCALE GENOMIC DNA]</scope>
    <source>
        <strain>ATCC 39541 / Classical Ogawa 395 / O395</strain>
    </source>
</reference>
<dbReference type="EMBL" id="L25659">
    <property type="protein sequence ID" value="AAA21729.1"/>
    <property type="molecule type" value="Genomic_DNA"/>
</dbReference>
<dbReference type="EMBL" id="CP000627">
    <property type="protein sequence ID" value="ABQ22151.1"/>
    <property type="molecule type" value="Genomic_DNA"/>
</dbReference>
<dbReference type="EMBL" id="CP001235">
    <property type="protein sequence ID" value="ACP08856.1"/>
    <property type="molecule type" value="Genomic_DNA"/>
</dbReference>
<dbReference type="RefSeq" id="WP_000591846.1">
    <property type="nucleotide sequence ID" value="NZ_JAACZH010000023.1"/>
</dbReference>
<dbReference type="SMR" id="A5F389"/>
<dbReference type="KEGG" id="vco:VC0395_A0350"/>
<dbReference type="KEGG" id="vcr:VC395_0841"/>
<dbReference type="PATRIC" id="fig|345073.21.peg.813"/>
<dbReference type="eggNOG" id="COG0840">
    <property type="taxonomic scope" value="Bacteria"/>
</dbReference>
<dbReference type="HOGENOM" id="CLU_000445_107_19_6"/>
<dbReference type="OrthoDB" id="2489132at2"/>
<dbReference type="Proteomes" id="UP000000249">
    <property type="component" value="Chromosome 2"/>
</dbReference>
<dbReference type="GO" id="GO:0005886">
    <property type="term" value="C:plasma membrane"/>
    <property type="evidence" value="ECO:0007669"/>
    <property type="project" value="UniProtKB-SubCell"/>
</dbReference>
<dbReference type="GO" id="GO:0006935">
    <property type="term" value="P:chemotaxis"/>
    <property type="evidence" value="ECO:0007669"/>
    <property type="project" value="UniProtKB-ARBA"/>
</dbReference>
<dbReference type="GO" id="GO:0007165">
    <property type="term" value="P:signal transduction"/>
    <property type="evidence" value="ECO:0007669"/>
    <property type="project" value="UniProtKB-KW"/>
</dbReference>
<dbReference type="CDD" id="cd11386">
    <property type="entry name" value="MCP_signal"/>
    <property type="match status" value="1"/>
</dbReference>
<dbReference type="FunFam" id="1.10.287.950:FF:000001">
    <property type="entry name" value="Methyl-accepting chemotaxis sensory transducer"/>
    <property type="match status" value="1"/>
</dbReference>
<dbReference type="Gene3D" id="1.10.287.950">
    <property type="entry name" value="Methyl-accepting chemotaxis protein"/>
    <property type="match status" value="1"/>
</dbReference>
<dbReference type="Gene3D" id="3.30.450.20">
    <property type="entry name" value="PAS domain"/>
    <property type="match status" value="1"/>
</dbReference>
<dbReference type="InterPro" id="IPR004089">
    <property type="entry name" value="MCPsignal_dom"/>
</dbReference>
<dbReference type="InterPro" id="IPR029151">
    <property type="entry name" value="Sensor-like_sf"/>
</dbReference>
<dbReference type="PANTHER" id="PTHR32089">
    <property type="entry name" value="METHYL-ACCEPTING CHEMOTAXIS PROTEIN MCPB"/>
    <property type="match status" value="1"/>
</dbReference>
<dbReference type="PANTHER" id="PTHR32089:SF33">
    <property type="entry name" value="TOXIN COREGULATED PILUS BIOSYNTHESIS PROTEIN I"/>
    <property type="match status" value="1"/>
</dbReference>
<dbReference type="Pfam" id="PF00015">
    <property type="entry name" value="MCPsignal"/>
    <property type="match status" value="1"/>
</dbReference>
<dbReference type="SMART" id="SM00283">
    <property type="entry name" value="MA"/>
    <property type="match status" value="1"/>
</dbReference>
<dbReference type="SUPFAM" id="SSF58104">
    <property type="entry name" value="Methyl-accepting chemotaxis protein (MCP) signaling domain"/>
    <property type="match status" value="1"/>
</dbReference>
<dbReference type="SUPFAM" id="SSF103190">
    <property type="entry name" value="Sensory domain-like"/>
    <property type="match status" value="1"/>
</dbReference>
<dbReference type="PROSITE" id="PS50111">
    <property type="entry name" value="CHEMOTAXIS_TRANSDUC_2"/>
    <property type="match status" value="1"/>
</dbReference>